<feature type="chain" id="PRO_0000247871" description="tRNA-guanine(15) transglycosylase">
    <location>
        <begin position="1"/>
        <end position="649"/>
    </location>
</feature>
<feature type="domain" description="PUA" evidence="1">
    <location>
        <begin position="573"/>
        <end position="648"/>
    </location>
</feature>
<feature type="active site" description="Nucleophile" evidence="1">
    <location>
        <position position="88"/>
    </location>
</feature>
<feature type="binding site" evidence="1">
    <location>
        <position position="123"/>
    </location>
    <ligand>
        <name>substrate</name>
    </ligand>
</feature>
<feature type="binding site" evidence="1">
    <location>
        <position position="194"/>
    </location>
    <ligand>
        <name>substrate</name>
    </ligand>
</feature>
<feature type="binding site" evidence="1">
    <location>
        <position position="280"/>
    </location>
    <ligand>
        <name>Zn(2+)</name>
        <dbReference type="ChEBI" id="CHEBI:29105"/>
    </ligand>
</feature>
<feature type="binding site" evidence="1">
    <location>
        <position position="282"/>
    </location>
    <ligand>
        <name>Zn(2+)</name>
        <dbReference type="ChEBI" id="CHEBI:29105"/>
    </ligand>
</feature>
<feature type="binding site" evidence="1">
    <location>
        <position position="285"/>
    </location>
    <ligand>
        <name>Zn(2+)</name>
        <dbReference type="ChEBI" id="CHEBI:29105"/>
    </ligand>
</feature>
<proteinExistence type="inferred from homology"/>
<accession>Q6LZL5</accession>
<sequence length="649" mass="74401">MFEIKARDAMGRLGSITINGKKIETPTIMPVIHPNPKKQTVSMDLINKMADVVITNSYITYTTPELREIAETKGIHELIDFKNVVVTDSGSFQLSVYGDVNVGPMEIIDFQEKIGVDVGTILDIPTGPDVSREKAESDLIETFKRAEDSIKRRKEMGYKLALNGTIQGSKYLDLRQKSAEVMGKMDFDIYPIGAVVPLMEDYRYREVAEVILNSKMHLPTNKPVHLFGCGHPMLFALSVALGCDLFDSAAYALYAKNGRYLTADGTLHLKDMKDLKSFPCTCKVCSEYTPKQLYNLEEKEKTRLLAEHNLYVTFEEIDRIKNAIKEGNLWELVEERCRSHPKLLNGLRVISKYMDFIEKHDPVSKKSGFFYTGYESMNRPEIYRHKQRLDRIQYDKIYVTSVSENTSKPYSENLSNVPCDVDVLVKDSVFGLVPLNIDTMYPLAQNEVPDLYDFEKKYNNEFVSEFNEKHAEKILDISTYNYYINHYGKKKECDKINPDIFRIGKMLEYQYGAKILDEELMEKVKSRRSKNTGRIRNLLLEKEVLFTLRANDNFLIPAKSGAELLHEKLEFPKYRIVIDSSVEEFARAGKSVYSKFVKDCDPELRPFEEVLIVNSDDELLAYGTTILNGRELMEFDYGVAATLRGGLKK</sequence>
<protein>
    <recommendedName>
        <fullName evidence="1">tRNA-guanine(15) transglycosylase</fullName>
        <ecNumber evidence="1">2.4.2.48</ecNumber>
    </recommendedName>
    <alternativeName>
        <fullName evidence="1">7-cyano-7-deazaguanine tRNA-ribosyltransferase</fullName>
    </alternativeName>
    <alternativeName>
        <fullName evidence="1">Archaeal tRNA-guanine transglycosylase</fullName>
    </alternativeName>
</protein>
<name>ATGT_METMP</name>
<keyword id="KW-0328">Glycosyltransferase</keyword>
<keyword id="KW-0479">Metal-binding</keyword>
<keyword id="KW-1185">Reference proteome</keyword>
<keyword id="KW-0808">Transferase</keyword>
<keyword id="KW-0819">tRNA processing</keyword>
<keyword id="KW-0862">Zinc</keyword>
<reference key="1">
    <citation type="journal article" date="2004" name="J. Bacteriol.">
        <title>Complete genome sequence of the genetically tractable hydrogenotrophic methanogen Methanococcus maripaludis.</title>
        <authorList>
            <person name="Hendrickson E.L."/>
            <person name="Kaul R."/>
            <person name="Zhou Y."/>
            <person name="Bovee D."/>
            <person name="Chapman P."/>
            <person name="Chung J."/>
            <person name="Conway de Macario E."/>
            <person name="Dodsworth J.A."/>
            <person name="Gillett W."/>
            <person name="Graham D.E."/>
            <person name="Hackett M."/>
            <person name="Haydock A.K."/>
            <person name="Kang A."/>
            <person name="Land M.L."/>
            <person name="Levy R."/>
            <person name="Lie T.J."/>
            <person name="Major T.A."/>
            <person name="Moore B.C."/>
            <person name="Porat I."/>
            <person name="Palmeiri A."/>
            <person name="Rouse G."/>
            <person name="Saenphimmachak C."/>
            <person name="Soell D."/>
            <person name="Van Dien S."/>
            <person name="Wang T."/>
            <person name="Whitman W.B."/>
            <person name="Xia Q."/>
            <person name="Zhang Y."/>
            <person name="Larimer F.W."/>
            <person name="Olson M.V."/>
            <person name="Leigh J.A."/>
        </authorList>
    </citation>
    <scope>NUCLEOTIDE SEQUENCE [LARGE SCALE GENOMIC DNA]</scope>
    <source>
        <strain>DSM 14266 / JCM 13030 / NBRC 101832 / S2 / LL</strain>
    </source>
</reference>
<evidence type="ECO:0000255" key="1">
    <source>
        <dbReference type="HAMAP-Rule" id="MF_01634"/>
    </source>
</evidence>
<dbReference type="EC" id="2.4.2.48" evidence="1"/>
<dbReference type="EMBL" id="BX950229">
    <property type="protein sequence ID" value="CAF30166.1"/>
    <property type="molecule type" value="Genomic_DNA"/>
</dbReference>
<dbReference type="RefSeq" id="WP_011170554.1">
    <property type="nucleotide sequence ID" value="NC_005791.1"/>
</dbReference>
<dbReference type="SMR" id="Q6LZL5"/>
<dbReference type="STRING" id="267377.MMP0610"/>
<dbReference type="EnsemblBacteria" id="CAF30166">
    <property type="protein sequence ID" value="CAF30166"/>
    <property type="gene ID" value="MMP0610"/>
</dbReference>
<dbReference type="GeneID" id="2762310"/>
<dbReference type="KEGG" id="mmp:MMP0610"/>
<dbReference type="PATRIC" id="fig|267377.15.peg.624"/>
<dbReference type="eggNOG" id="arCOG00989">
    <property type="taxonomic scope" value="Archaea"/>
</dbReference>
<dbReference type="eggNOG" id="arCOG00991">
    <property type="taxonomic scope" value="Archaea"/>
</dbReference>
<dbReference type="HOGENOM" id="CLU_030083_0_0_2"/>
<dbReference type="OrthoDB" id="6871at2157"/>
<dbReference type="UniPathway" id="UPA00393"/>
<dbReference type="Proteomes" id="UP000000590">
    <property type="component" value="Chromosome"/>
</dbReference>
<dbReference type="GO" id="GO:0005737">
    <property type="term" value="C:cytoplasm"/>
    <property type="evidence" value="ECO:0007669"/>
    <property type="project" value="TreeGrafter"/>
</dbReference>
<dbReference type="GO" id="GO:0016763">
    <property type="term" value="F:pentosyltransferase activity"/>
    <property type="evidence" value="ECO:0007669"/>
    <property type="project" value="UniProtKB-UniRule"/>
</dbReference>
<dbReference type="GO" id="GO:0003723">
    <property type="term" value="F:RNA binding"/>
    <property type="evidence" value="ECO:0007669"/>
    <property type="project" value="InterPro"/>
</dbReference>
<dbReference type="GO" id="GO:0008270">
    <property type="term" value="F:zinc ion binding"/>
    <property type="evidence" value="ECO:0007669"/>
    <property type="project" value="UniProtKB-UniRule"/>
</dbReference>
<dbReference type="GO" id="GO:0002099">
    <property type="term" value="P:tRNA wobble guanine modification"/>
    <property type="evidence" value="ECO:0007669"/>
    <property type="project" value="TreeGrafter"/>
</dbReference>
<dbReference type="CDD" id="cd21149">
    <property type="entry name" value="PUA_archaeosine_TGT"/>
    <property type="match status" value="1"/>
</dbReference>
<dbReference type="Gene3D" id="3.90.1020.10">
    <property type="entry name" value="ArcTGT, C1 domain"/>
    <property type="match status" value="1"/>
</dbReference>
<dbReference type="Gene3D" id="3.10.450.90">
    <property type="entry name" value="ArcTGT, C2 domain"/>
    <property type="match status" value="1"/>
</dbReference>
<dbReference type="Gene3D" id="2.30.130.10">
    <property type="entry name" value="PUA domain"/>
    <property type="match status" value="1"/>
</dbReference>
<dbReference type="Gene3D" id="3.20.20.105">
    <property type="entry name" value="Queuine tRNA-ribosyltransferase-like"/>
    <property type="match status" value="1"/>
</dbReference>
<dbReference type="HAMAP" id="MF_01634">
    <property type="entry name" value="TgtA_arch"/>
    <property type="match status" value="1"/>
</dbReference>
<dbReference type="InterPro" id="IPR050076">
    <property type="entry name" value="ArchSynthase1/Queuine_TRR"/>
</dbReference>
<dbReference type="InterPro" id="IPR038370">
    <property type="entry name" value="ArcTGT_C1_sf"/>
</dbReference>
<dbReference type="InterPro" id="IPR002478">
    <property type="entry name" value="PUA"/>
</dbReference>
<dbReference type="InterPro" id="IPR015947">
    <property type="entry name" value="PUA-like_sf"/>
</dbReference>
<dbReference type="InterPro" id="IPR036974">
    <property type="entry name" value="PUA_sf"/>
</dbReference>
<dbReference type="InterPro" id="IPR036511">
    <property type="entry name" value="TGT-like_sf"/>
</dbReference>
<dbReference type="InterPro" id="IPR029402">
    <property type="entry name" value="TGT_C2"/>
</dbReference>
<dbReference type="InterPro" id="IPR038250">
    <property type="entry name" value="TGT_C2_sf"/>
</dbReference>
<dbReference type="InterPro" id="IPR004804">
    <property type="entry name" value="TgtA"/>
</dbReference>
<dbReference type="InterPro" id="IPR002616">
    <property type="entry name" value="tRNA_ribo_trans-like"/>
</dbReference>
<dbReference type="NCBIfam" id="TIGR00432">
    <property type="entry name" value="arcsn_tRNA_tgt"/>
    <property type="match status" value="1"/>
</dbReference>
<dbReference type="NCBIfam" id="TIGR00449">
    <property type="entry name" value="tgt_general"/>
    <property type="match status" value="1"/>
</dbReference>
<dbReference type="PANTHER" id="PTHR46499">
    <property type="entry name" value="QUEUINE TRNA-RIBOSYLTRANSFERASE"/>
    <property type="match status" value="1"/>
</dbReference>
<dbReference type="PANTHER" id="PTHR46499:SF1">
    <property type="entry name" value="QUEUINE TRNA-RIBOSYLTRANSFERASE"/>
    <property type="match status" value="1"/>
</dbReference>
<dbReference type="Pfam" id="PF01472">
    <property type="entry name" value="PUA"/>
    <property type="match status" value="1"/>
</dbReference>
<dbReference type="Pfam" id="PF01702">
    <property type="entry name" value="TGT"/>
    <property type="match status" value="1"/>
</dbReference>
<dbReference type="Pfam" id="PF14810">
    <property type="entry name" value="TGT_C2"/>
    <property type="match status" value="1"/>
</dbReference>
<dbReference type="SMART" id="SM00359">
    <property type="entry name" value="PUA"/>
    <property type="match status" value="1"/>
</dbReference>
<dbReference type="SUPFAM" id="SSF88802">
    <property type="entry name" value="Pre-PUA domain"/>
    <property type="match status" value="1"/>
</dbReference>
<dbReference type="SUPFAM" id="SSF88697">
    <property type="entry name" value="PUA domain-like"/>
    <property type="match status" value="1"/>
</dbReference>
<dbReference type="SUPFAM" id="SSF51713">
    <property type="entry name" value="tRNA-guanine transglycosylase"/>
    <property type="match status" value="1"/>
</dbReference>
<dbReference type="PROSITE" id="PS50890">
    <property type="entry name" value="PUA"/>
    <property type="match status" value="1"/>
</dbReference>
<organism>
    <name type="scientific">Methanococcus maripaludis (strain DSM 14266 / JCM 13030 / NBRC 101832 / S2 / LL)</name>
    <dbReference type="NCBI Taxonomy" id="267377"/>
    <lineage>
        <taxon>Archaea</taxon>
        <taxon>Methanobacteriati</taxon>
        <taxon>Methanobacteriota</taxon>
        <taxon>Methanomada group</taxon>
        <taxon>Methanococci</taxon>
        <taxon>Methanococcales</taxon>
        <taxon>Methanococcaceae</taxon>
        <taxon>Methanococcus</taxon>
    </lineage>
</organism>
<gene>
    <name evidence="1" type="primary">tgtA</name>
    <name type="ordered locus">MMP0610</name>
</gene>
<comment type="function">
    <text evidence="1">Exchanges the guanine residue with 7-cyano-7-deazaguanine (preQ0) at position 15 in the dihydrouridine loop (D-loop) of archaeal tRNAs.</text>
</comment>
<comment type="catalytic activity">
    <reaction evidence="1">
        <text>guanosine(15) in tRNA + 7-cyano-7-deazaguanine = 7-cyano-7-carbaguanosine(15) in tRNA + guanine</text>
        <dbReference type="Rhea" id="RHEA:43164"/>
        <dbReference type="Rhea" id="RHEA-COMP:10371"/>
        <dbReference type="Rhea" id="RHEA-COMP:10372"/>
        <dbReference type="ChEBI" id="CHEBI:16235"/>
        <dbReference type="ChEBI" id="CHEBI:45075"/>
        <dbReference type="ChEBI" id="CHEBI:74269"/>
        <dbReference type="ChEBI" id="CHEBI:82850"/>
        <dbReference type="EC" id="2.4.2.48"/>
    </reaction>
</comment>
<comment type="cofactor">
    <cofactor evidence="1">
        <name>Zn(2+)</name>
        <dbReference type="ChEBI" id="CHEBI:29105"/>
    </cofactor>
    <text evidence="1">Binds 1 zinc ion per subunit.</text>
</comment>
<comment type="pathway">
    <text evidence="1">tRNA modification; archaeosine-tRNA biosynthesis.</text>
</comment>
<comment type="similarity">
    <text evidence="1">Belongs to the archaeosine tRNA-ribosyltransferase family.</text>
</comment>